<protein>
    <recommendedName>
        <fullName evidence="1">tRNA uridine(34) hydroxylase</fullName>
        <ecNumber evidence="1">1.14.-.-</ecNumber>
    </recommendedName>
    <alternativeName>
        <fullName evidence="1">tRNA hydroxylation protein O</fullName>
    </alternativeName>
</protein>
<organism>
    <name type="scientific">Shewanella denitrificans (strain OS217 / ATCC BAA-1090 / DSM 15013)</name>
    <dbReference type="NCBI Taxonomy" id="318161"/>
    <lineage>
        <taxon>Bacteria</taxon>
        <taxon>Pseudomonadati</taxon>
        <taxon>Pseudomonadota</taxon>
        <taxon>Gammaproteobacteria</taxon>
        <taxon>Alteromonadales</taxon>
        <taxon>Shewanellaceae</taxon>
        <taxon>Shewanella</taxon>
    </lineage>
</organism>
<proteinExistence type="inferred from homology"/>
<keyword id="KW-0560">Oxidoreductase</keyword>
<keyword id="KW-1185">Reference proteome</keyword>
<keyword id="KW-0819">tRNA processing</keyword>
<sequence length="326" mass="37044">MSQVVVCALYKFVTLPHYESLRAPLLAVMEASDIRGTLLLAQEGINGTVAGTQAAIDGLLAWFDTQEGLDNIVSKVSFDAQMPFYRTKVKLKKEIVTMGVEGIDPRKVVGTYVKPKDWNALISDPDVILVDTRNDYEVQIGTFKHAVNPVTETFREFPEYVKQNLDPAKHKKVAMFCTGGIRCEKSTAYLKEQGFDEVYHLEGGILKYLEEVKQEESLWEGECFVFDNRVSVNHNLEKGVYDQCNACRMPITEQDKLLPSFVQGVSCPHCIDKIPQEQRQRFIERERQVQLARQRGEAHIGSDVKQVIATRREKKDSLRKAQNEQS</sequence>
<gene>
    <name evidence="1" type="primary">trhO</name>
    <name type="ordered locus">Sden_2100</name>
</gene>
<feature type="chain" id="PRO_1000013771" description="tRNA uridine(34) hydroxylase">
    <location>
        <begin position="1"/>
        <end position="326"/>
    </location>
</feature>
<feature type="domain" description="Rhodanese" evidence="1">
    <location>
        <begin position="123"/>
        <end position="217"/>
    </location>
</feature>
<feature type="active site" description="Cysteine persulfide intermediate" evidence="1">
    <location>
        <position position="177"/>
    </location>
</feature>
<accession>Q12ME4</accession>
<name>TRHO_SHEDO</name>
<reference key="1">
    <citation type="submission" date="2006-03" db="EMBL/GenBank/DDBJ databases">
        <title>Complete sequence of Shewanella denitrificans OS217.</title>
        <authorList>
            <consortium name="US DOE Joint Genome Institute"/>
            <person name="Copeland A."/>
            <person name="Lucas S."/>
            <person name="Lapidus A."/>
            <person name="Barry K."/>
            <person name="Detter J.C."/>
            <person name="Glavina del Rio T."/>
            <person name="Hammon N."/>
            <person name="Israni S."/>
            <person name="Dalin E."/>
            <person name="Tice H."/>
            <person name="Pitluck S."/>
            <person name="Brettin T."/>
            <person name="Bruce D."/>
            <person name="Han C."/>
            <person name="Tapia R."/>
            <person name="Gilna P."/>
            <person name="Kiss H."/>
            <person name="Schmutz J."/>
            <person name="Larimer F."/>
            <person name="Land M."/>
            <person name="Hauser L."/>
            <person name="Kyrpides N."/>
            <person name="Lykidis A."/>
            <person name="Richardson P."/>
        </authorList>
    </citation>
    <scope>NUCLEOTIDE SEQUENCE [LARGE SCALE GENOMIC DNA]</scope>
    <source>
        <strain>OS217 / ATCC BAA-1090 / DSM 15013</strain>
    </source>
</reference>
<comment type="function">
    <text evidence="1">Catalyzes oxygen-dependent 5-hydroxyuridine (ho5U) modification at position 34 in tRNAs.</text>
</comment>
<comment type="catalytic activity">
    <reaction evidence="1">
        <text>uridine(34) in tRNA + AH2 + O2 = 5-hydroxyuridine(34) in tRNA + A + H2O</text>
        <dbReference type="Rhea" id="RHEA:64224"/>
        <dbReference type="Rhea" id="RHEA-COMP:11727"/>
        <dbReference type="Rhea" id="RHEA-COMP:13381"/>
        <dbReference type="ChEBI" id="CHEBI:13193"/>
        <dbReference type="ChEBI" id="CHEBI:15377"/>
        <dbReference type="ChEBI" id="CHEBI:15379"/>
        <dbReference type="ChEBI" id="CHEBI:17499"/>
        <dbReference type="ChEBI" id="CHEBI:65315"/>
        <dbReference type="ChEBI" id="CHEBI:136877"/>
    </reaction>
</comment>
<comment type="similarity">
    <text evidence="1">Belongs to the TrhO family.</text>
</comment>
<evidence type="ECO:0000255" key="1">
    <source>
        <dbReference type="HAMAP-Rule" id="MF_00469"/>
    </source>
</evidence>
<dbReference type="EC" id="1.14.-.-" evidence="1"/>
<dbReference type="EMBL" id="CP000302">
    <property type="protein sequence ID" value="ABE55382.1"/>
    <property type="molecule type" value="Genomic_DNA"/>
</dbReference>
<dbReference type="RefSeq" id="WP_011496537.1">
    <property type="nucleotide sequence ID" value="NC_007954.1"/>
</dbReference>
<dbReference type="SMR" id="Q12ME4"/>
<dbReference type="STRING" id="318161.Sden_2100"/>
<dbReference type="KEGG" id="sdn:Sden_2100"/>
<dbReference type="eggNOG" id="COG1054">
    <property type="taxonomic scope" value="Bacteria"/>
</dbReference>
<dbReference type="HOGENOM" id="CLU_038878_0_0_6"/>
<dbReference type="OrthoDB" id="9778326at2"/>
<dbReference type="Proteomes" id="UP000001982">
    <property type="component" value="Chromosome"/>
</dbReference>
<dbReference type="GO" id="GO:0016705">
    <property type="term" value="F:oxidoreductase activity, acting on paired donors, with incorporation or reduction of molecular oxygen"/>
    <property type="evidence" value="ECO:0007669"/>
    <property type="project" value="UniProtKB-UniRule"/>
</dbReference>
<dbReference type="GO" id="GO:0006400">
    <property type="term" value="P:tRNA modification"/>
    <property type="evidence" value="ECO:0007669"/>
    <property type="project" value="UniProtKB-UniRule"/>
</dbReference>
<dbReference type="CDD" id="cd01518">
    <property type="entry name" value="RHOD_YceA"/>
    <property type="match status" value="1"/>
</dbReference>
<dbReference type="Gene3D" id="3.30.70.100">
    <property type="match status" value="1"/>
</dbReference>
<dbReference type="Gene3D" id="3.40.250.10">
    <property type="entry name" value="Rhodanese-like domain"/>
    <property type="match status" value="1"/>
</dbReference>
<dbReference type="HAMAP" id="MF_00469">
    <property type="entry name" value="TrhO"/>
    <property type="match status" value="1"/>
</dbReference>
<dbReference type="InterPro" id="IPR001763">
    <property type="entry name" value="Rhodanese-like_dom"/>
</dbReference>
<dbReference type="InterPro" id="IPR036873">
    <property type="entry name" value="Rhodanese-like_dom_sf"/>
</dbReference>
<dbReference type="InterPro" id="IPR020936">
    <property type="entry name" value="TrhO"/>
</dbReference>
<dbReference type="InterPro" id="IPR040503">
    <property type="entry name" value="TRHO_N"/>
</dbReference>
<dbReference type="NCBIfam" id="NF001136">
    <property type="entry name" value="PRK00142.1-4"/>
    <property type="match status" value="1"/>
</dbReference>
<dbReference type="PANTHER" id="PTHR43268:SF3">
    <property type="entry name" value="RHODANESE-LIKE DOMAIN-CONTAINING PROTEIN 7-RELATED"/>
    <property type="match status" value="1"/>
</dbReference>
<dbReference type="PANTHER" id="PTHR43268">
    <property type="entry name" value="THIOSULFATE SULFURTRANSFERASE/RHODANESE-LIKE DOMAIN-CONTAINING PROTEIN 2"/>
    <property type="match status" value="1"/>
</dbReference>
<dbReference type="Pfam" id="PF00581">
    <property type="entry name" value="Rhodanese"/>
    <property type="match status" value="1"/>
</dbReference>
<dbReference type="Pfam" id="PF17773">
    <property type="entry name" value="UPF0176_N"/>
    <property type="match status" value="1"/>
</dbReference>
<dbReference type="SMART" id="SM00450">
    <property type="entry name" value="RHOD"/>
    <property type="match status" value="1"/>
</dbReference>
<dbReference type="SUPFAM" id="SSF52821">
    <property type="entry name" value="Rhodanese/Cell cycle control phosphatase"/>
    <property type="match status" value="1"/>
</dbReference>
<dbReference type="PROSITE" id="PS50206">
    <property type="entry name" value="RHODANESE_3"/>
    <property type="match status" value="1"/>
</dbReference>